<name>FUCM_SALEP</name>
<sequence length="140" mass="15254">MLKTISPLISPTLLKVLAEMGHGDEIIFSDAHFPAHSLGPQVIRADGLSVSDLLRAIIPLFELDSYAPPLVMMAAVEGDTLDPSVEARYRDALSLEAPCPDIVRIDRYAFYERAQKAFAIVITGECAKYGNILLKKGVTP</sequence>
<keyword id="KW-0119">Carbohydrate metabolism</keyword>
<keyword id="KW-0963">Cytoplasm</keyword>
<keyword id="KW-0294">Fucose metabolism</keyword>
<keyword id="KW-0413">Isomerase</keyword>
<dbReference type="EC" id="5.1.3.29" evidence="1"/>
<dbReference type="EMBL" id="AM933172">
    <property type="protein sequence ID" value="CAR34401.1"/>
    <property type="molecule type" value="Genomic_DNA"/>
</dbReference>
<dbReference type="RefSeq" id="WP_000920848.1">
    <property type="nucleotide sequence ID" value="NC_011294.1"/>
</dbReference>
<dbReference type="SMR" id="B5QWR2"/>
<dbReference type="KEGG" id="set:SEN2822"/>
<dbReference type="HOGENOM" id="CLU_120075_1_0_6"/>
<dbReference type="UniPathway" id="UPA00956"/>
<dbReference type="Proteomes" id="UP000000613">
    <property type="component" value="Chromosome"/>
</dbReference>
<dbReference type="GO" id="GO:0005737">
    <property type="term" value="C:cytoplasm"/>
    <property type="evidence" value="ECO:0007669"/>
    <property type="project" value="UniProtKB-SubCell"/>
</dbReference>
<dbReference type="GO" id="GO:0042806">
    <property type="term" value="F:fucose binding"/>
    <property type="evidence" value="ECO:0007669"/>
    <property type="project" value="InterPro"/>
</dbReference>
<dbReference type="GO" id="GO:0036373">
    <property type="term" value="F:L-fucose mutarotase activity"/>
    <property type="evidence" value="ECO:0007669"/>
    <property type="project" value="UniProtKB-EC"/>
</dbReference>
<dbReference type="GO" id="GO:0036065">
    <property type="term" value="P:fucosylation"/>
    <property type="evidence" value="ECO:0007669"/>
    <property type="project" value="TreeGrafter"/>
</dbReference>
<dbReference type="GO" id="GO:0042354">
    <property type="term" value="P:L-fucose metabolic process"/>
    <property type="evidence" value="ECO:0007669"/>
    <property type="project" value="UniProtKB-UniRule"/>
</dbReference>
<dbReference type="FunFam" id="3.40.1650.10:FF:000001">
    <property type="entry name" value="L-fucose mutarotase"/>
    <property type="match status" value="1"/>
</dbReference>
<dbReference type="Gene3D" id="3.40.1650.10">
    <property type="entry name" value="RbsD-like domain"/>
    <property type="match status" value="1"/>
</dbReference>
<dbReference type="HAMAP" id="MF_01662">
    <property type="entry name" value="L_fucose_rotase"/>
    <property type="match status" value="1"/>
</dbReference>
<dbReference type="InterPro" id="IPR023751">
    <property type="entry name" value="L-fucose_mutarotase"/>
</dbReference>
<dbReference type="InterPro" id="IPR023750">
    <property type="entry name" value="RbsD-like_sf"/>
</dbReference>
<dbReference type="InterPro" id="IPR050443">
    <property type="entry name" value="RbsD/FucU_mutarotase"/>
</dbReference>
<dbReference type="InterPro" id="IPR007721">
    <property type="entry name" value="RbsD_FucU"/>
</dbReference>
<dbReference type="NCBIfam" id="NF011949">
    <property type="entry name" value="PRK15420.1"/>
    <property type="match status" value="1"/>
</dbReference>
<dbReference type="PANTHER" id="PTHR31690">
    <property type="entry name" value="FUCOSE MUTAROTASE"/>
    <property type="match status" value="1"/>
</dbReference>
<dbReference type="PANTHER" id="PTHR31690:SF4">
    <property type="entry name" value="FUCOSE MUTAROTASE"/>
    <property type="match status" value="1"/>
</dbReference>
<dbReference type="Pfam" id="PF05025">
    <property type="entry name" value="RbsD_FucU"/>
    <property type="match status" value="1"/>
</dbReference>
<dbReference type="SUPFAM" id="SSF102546">
    <property type="entry name" value="RbsD-like"/>
    <property type="match status" value="1"/>
</dbReference>
<feature type="chain" id="PRO_1000187193" description="L-fucose mutarotase">
    <location>
        <begin position="1"/>
        <end position="140"/>
    </location>
</feature>
<feature type="active site" description="Proton donor" evidence="1">
    <location>
        <position position="22"/>
    </location>
</feature>
<feature type="binding site" evidence="1">
    <location>
        <position position="30"/>
    </location>
    <ligand>
        <name>substrate</name>
    </ligand>
</feature>
<feature type="binding site" evidence="1">
    <location>
        <position position="107"/>
    </location>
    <ligand>
        <name>substrate</name>
    </ligand>
</feature>
<feature type="binding site" evidence="1">
    <location>
        <begin position="129"/>
        <end position="131"/>
    </location>
    <ligand>
        <name>substrate</name>
    </ligand>
</feature>
<protein>
    <recommendedName>
        <fullName evidence="1">L-fucose mutarotase</fullName>
        <ecNumber evidence="1">5.1.3.29</ecNumber>
    </recommendedName>
    <alternativeName>
        <fullName evidence="1">Fucose 1-epimerase</fullName>
    </alternativeName>
    <alternativeName>
        <fullName evidence="1">Type-2 mutarotase</fullName>
    </alternativeName>
</protein>
<evidence type="ECO:0000255" key="1">
    <source>
        <dbReference type="HAMAP-Rule" id="MF_01662"/>
    </source>
</evidence>
<proteinExistence type="inferred from homology"/>
<reference key="1">
    <citation type="journal article" date="2008" name="Genome Res.">
        <title>Comparative genome analysis of Salmonella enteritidis PT4 and Salmonella gallinarum 287/91 provides insights into evolutionary and host adaptation pathways.</title>
        <authorList>
            <person name="Thomson N.R."/>
            <person name="Clayton D.J."/>
            <person name="Windhorst D."/>
            <person name="Vernikos G."/>
            <person name="Davidson S."/>
            <person name="Churcher C."/>
            <person name="Quail M.A."/>
            <person name="Stevens M."/>
            <person name="Jones M.A."/>
            <person name="Watson M."/>
            <person name="Barron A."/>
            <person name="Layton A."/>
            <person name="Pickard D."/>
            <person name="Kingsley R.A."/>
            <person name="Bignell A."/>
            <person name="Clark L."/>
            <person name="Harris B."/>
            <person name="Ormond D."/>
            <person name="Abdellah Z."/>
            <person name="Brooks K."/>
            <person name="Cherevach I."/>
            <person name="Chillingworth T."/>
            <person name="Woodward J."/>
            <person name="Norberczak H."/>
            <person name="Lord A."/>
            <person name="Arrowsmith C."/>
            <person name="Jagels K."/>
            <person name="Moule S."/>
            <person name="Mungall K."/>
            <person name="Saunders M."/>
            <person name="Whitehead S."/>
            <person name="Chabalgoity J.A."/>
            <person name="Maskell D."/>
            <person name="Humphreys T."/>
            <person name="Roberts M."/>
            <person name="Barrow P.A."/>
            <person name="Dougan G."/>
            <person name="Parkhill J."/>
        </authorList>
    </citation>
    <scope>NUCLEOTIDE SEQUENCE [LARGE SCALE GENOMIC DNA]</scope>
    <source>
        <strain>P125109</strain>
    </source>
</reference>
<comment type="function">
    <text evidence="1">Involved in the anomeric conversion of L-fucose.</text>
</comment>
<comment type="catalytic activity">
    <reaction evidence="1">
        <text>alpha-L-fucose = beta-L-fucose</text>
        <dbReference type="Rhea" id="RHEA:25580"/>
        <dbReference type="ChEBI" id="CHEBI:42548"/>
        <dbReference type="ChEBI" id="CHEBI:42589"/>
        <dbReference type="EC" id="5.1.3.29"/>
    </reaction>
</comment>
<comment type="pathway">
    <text evidence="1">Carbohydrate metabolism; L-fucose metabolism.</text>
</comment>
<comment type="subunit">
    <text evidence="1">Homodecamer.</text>
</comment>
<comment type="subcellular location">
    <subcellularLocation>
        <location evidence="1">Cytoplasm</location>
    </subcellularLocation>
</comment>
<comment type="similarity">
    <text evidence="1">Belongs to the RbsD / FucU family. FucU mutarotase subfamily.</text>
</comment>
<organism>
    <name type="scientific">Salmonella enteritidis PT4 (strain P125109)</name>
    <dbReference type="NCBI Taxonomy" id="550537"/>
    <lineage>
        <taxon>Bacteria</taxon>
        <taxon>Pseudomonadati</taxon>
        <taxon>Pseudomonadota</taxon>
        <taxon>Gammaproteobacteria</taxon>
        <taxon>Enterobacterales</taxon>
        <taxon>Enterobacteriaceae</taxon>
        <taxon>Salmonella</taxon>
    </lineage>
</organism>
<accession>B5QWR2</accession>
<gene>
    <name evidence="1" type="primary">fucU</name>
    <name type="ordered locus">SEN2822</name>
</gene>